<dbReference type="EC" id="4.2.1.19" evidence="1"/>
<dbReference type="EMBL" id="CP001348">
    <property type="protein sequence ID" value="ACL74769.1"/>
    <property type="molecule type" value="Genomic_DNA"/>
</dbReference>
<dbReference type="RefSeq" id="WP_012634832.1">
    <property type="nucleotide sequence ID" value="NC_011898.1"/>
</dbReference>
<dbReference type="SMR" id="B8I5V2"/>
<dbReference type="STRING" id="394503.Ccel_0384"/>
<dbReference type="KEGG" id="cce:Ccel_0384"/>
<dbReference type="eggNOG" id="COG0131">
    <property type="taxonomic scope" value="Bacteria"/>
</dbReference>
<dbReference type="HOGENOM" id="CLU_044308_2_0_9"/>
<dbReference type="OrthoDB" id="9790411at2"/>
<dbReference type="UniPathway" id="UPA00031">
    <property type="reaction ID" value="UER00011"/>
</dbReference>
<dbReference type="Proteomes" id="UP000001349">
    <property type="component" value="Chromosome"/>
</dbReference>
<dbReference type="GO" id="GO:0005737">
    <property type="term" value="C:cytoplasm"/>
    <property type="evidence" value="ECO:0007669"/>
    <property type="project" value="UniProtKB-SubCell"/>
</dbReference>
<dbReference type="GO" id="GO:0004424">
    <property type="term" value="F:imidazoleglycerol-phosphate dehydratase activity"/>
    <property type="evidence" value="ECO:0007669"/>
    <property type="project" value="UniProtKB-UniRule"/>
</dbReference>
<dbReference type="GO" id="GO:0000105">
    <property type="term" value="P:L-histidine biosynthetic process"/>
    <property type="evidence" value="ECO:0007669"/>
    <property type="project" value="UniProtKB-UniRule"/>
</dbReference>
<dbReference type="CDD" id="cd07914">
    <property type="entry name" value="IGPD"/>
    <property type="match status" value="1"/>
</dbReference>
<dbReference type="FunFam" id="3.30.230.40:FF:000001">
    <property type="entry name" value="Imidazoleglycerol-phosphate dehydratase HisB"/>
    <property type="match status" value="1"/>
</dbReference>
<dbReference type="FunFam" id="3.30.230.40:FF:000003">
    <property type="entry name" value="Imidazoleglycerol-phosphate dehydratase HisB"/>
    <property type="match status" value="1"/>
</dbReference>
<dbReference type="Gene3D" id="3.30.230.40">
    <property type="entry name" value="Imidazole glycerol phosphate dehydratase, domain 1"/>
    <property type="match status" value="2"/>
</dbReference>
<dbReference type="HAMAP" id="MF_00076">
    <property type="entry name" value="HisB"/>
    <property type="match status" value="1"/>
</dbReference>
<dbReference type="InterPro" id="IPR038494">
    <property type="entry name" value="IGPD_sf"/>
</dbReference>
<dbReference type="InterPro" id="IPR000807">
    <property type="entry name" value="ImidazoleglycerolP_deHydtase"/>
</dbReference>
<dbReference type="InterPro" id="IPR020565">
    <property type="entry name" value="ImidazoleglycerP_deHydtase_CS"/>
</dbReference>
<dbReference type="InterPro" id="IPR020568">
    <property type="entry name" value="Ribosomal_Su5_D2-typ_SF"/>
</dbReference>
<dbReference type="NCBIfam" id="NF002107">
    <property type="entry name" value="PRK00951.1-2"/>
    <property type="match status" value="1"/>
</dbReference>
<dbReference type="NCBIfam" id="NF002111">
    <property type="entry name" value="PRK00951.2-1"/>
    <property type="match status" value="1"/>
</dbReference>
<dbReference type="NCBIfam" id="NF002114">
    <property type="entry name" value="PRK00951.2-4"/>
    <property type="match status" value="1"/>
</dbReference>
<dbReference type="PANTHER" id="PTHR23133:SF2">
    <property type="entry name" value="IMIDAZOLEGLYCEROL-PHOSPHATE DEHYDRATASE"/>
    <property type="match status" value="1"/>
</dbReference>
<dbReference type="PANTHER" id="PTHR23133">
    <property type="entry name" value="IMIDAZOLEGLYCEROL-PHOSPHATE DEHYDRATASE HIS7"/>
    <property type="match status" value="1"/>
</dbReference>
<dbReference type="Pfam" id="PF00475">
    <property type="entry name" value="IGPD"/>
    <property type="match status" value="1"/>
</dbReference>
<dbReference type="SUPFAM" id="SSF54211">
    <property type="entry name" value="Ribosomal protein S5 domain 2-like"/>
    <property type="match status" value="2"/>
</dbReference>
<dbReference type="PROSITE" id="PS00954">
    <property type="entry name" value="IGP_DEHYDRATASE_1"/>
    <property type="match status" value="1"/>
</dbReference>
<dbReference type="PROSITE" id="PS00955">
    <property type="entry name" value="IGP_DEHYDRATASE_2"/>
    <property type="match status" value="1"/>
</dbReference>
<sequence>MREGLVTRNTKETQINVKISLDGKGDCQANTGIGFFDHMLVLFTKHGLMDAYFDVKGDLHVDSHHTIEDTGIAMGLAIRQALGDKKSIRRYGTAYVPMDEALVLVSLDLSDRPYLVFDAQFSQPMVGQMDTQMVEEFFRAVAFNAGITLHIKVLHGSNCHHIIEAMFKAFGRAIDDATRLDTRIEGVLSTKGTL</sequence>
<evidence type="ECO:0000255" key="1">
    <source>
        <dbReference type="HAMAP-Rule" id="MF_00076"/>
    </source>
</evidence>
<keyword id="KW-0028">Amino-acid biosynthesis</keyword>
<keyword id="KW-0963">Cytoplasm</keyword>
<keyword id="KW-0368">Histidine biosynthesis</keyword>
<keyword id="KW-0456">Lyase</keyword>
<keyword id="KW-1185">Reference proteome</keyword>
<gene>
    <name evidence="1" type="primary">hisB</name>
    <name type="ordered locus">Ccel_0384</name>
</gene>
<proteinExistence type="inferred from homology"/>
<organism>
    <name type="scientific">Ruminiclostridium cellulolyticum (strain ATCC 35319 / DSM 5812 / JCM 6584 / H10)</name>
    <name type="common">Clostridium cellulolyticum</name>
    <dbReference type="NCBI Taxonomy" id="394503"/>
    <lineage>
        <taxon>Bacteria</taxon>
        <taxon>Bacillati</taxon>
        <taxon>Bacillota</taxon>
        <taxon>Clostridia</taxon>
        <taxon>Eubacteriales</taxon>
        <taxon>Oscillospiraceae</taxon>
        <taxon>Ruminiclostridium</taxon>
    </lineage>
</organism>
<comment type="catalytic activity">
    <reaction evidence="1">
        <text>D-erythro-1-(imidazol-4-yl)glycerol 3-phosphate = 3-(imidazol-4-yl)-2-oxopropyl phosphate + H2O</text>
        <dbReference type="Rhea" id="RHEA:11040"/>
        <dbReference type="ChEBI" id="CHEBI:15377"/>
        <dbReference type="ChEBI" id="CHEBI:57766"/>
        <dbReference type="ChEBI" id="CHEBI:58278"/>
        <dbReference type="EC" id="4.2.1.19"/>
    </reaction>
</comment>
<comment type="pathway">
    <text evidence="1">Amino-acid biosynthesis; L-histidine biosynthesis; L-histidine from 5-phospho-alpha-D-ribose 1-diphosphate: step 6/9.</text>
</comment>
<comment type="subcellular location">
    <subcellularLocation>
        <location evidence="1">Cytoplasm</location>
    </subcellularLocation>
</comment>
<comment type="similarity">
    <text evidence="1">Belongs to the imidazoleglycerol-phosphate dehydratase family.</text>
</comment>
<feature type="chain" id="PRO_1000190610" description="Imidazoleglycerol-phosphate dehydratase">
    <location>
        <begin position="1"/>
        <end position="194"/>
    </location>
</feature>
<accession>B8I5V2</accession>
<reference key="1">
    <citation type="submission" date="2009-01" db="EMBL/GenBank/DDBJ databases">
        <title>Complete sequence of Clostridium cellulolyticum H10.</title>
        <authorList>
            <consortium name="US DOE Joint Genome Institute"/>
            <person name="Lucas S."/>
            <person name="Copeland A."/>
            <person name="Lapidus A."/>
            <person name="Glavina del Rio T."/>
            <person name="Dalin E."/>
            <person name="Tice H."/>
            <person name="Bruce D."/>
            <person name="Goodwin L."/>
            <person name="Pitluck S."/>
            <person name="Chertkov O."/>
            <person name="Saunders E."/>
            <person name="Brettin T."/>
            <person name="Detter J.C."/>
            <person name="Han C."/>
            <person name="Larimer F."/>
            <person name="Land M."/>
            <person name="Hauser L."/>
            <person name="Kyrpides N."/>
            <person name="Ivanova N."/>
            <person name="Zhou J."/>
            <person name="Richardson P."/>
        </authorList>
    </citation>
    <scope>NUCLEOTIDE SEQUENCE [LARGE SCALE GENOMIC DNA]</scope>
    <source>
        <strain>ATCC 35319 / DSM 5812 / JCM 6584 / H10</strain>
    </source>
</reference>
<name>HIS7_RUMCH</name>
<protein>
    <recommendedName>
        <fullName evidence="1">Imidazoleglycerol-phosphate dehydratase</fullName>
        <shortName evidence="1">IGPD</shortName>
        <ecNumber evidence="1">4.2.1.19</ecNumber>
    </recommendedName>
</protein>